<name>CSGF_SALTI</name>
<dbReference type="EMBL" id="AL513382">
    <property type="protein sequence ID" value="CAD08264.1"/>
    <property type="molecule type" value="Genomic_DNA"/>
</dbReference>
<dbReference type="EMBL" id="AE014613">
    <property type="protein sequence ID" value="AAO69403.1"/>
    <property type="molecule type" value="Genomic_DNA"/>
</dbReference>
<dbReference type="RefSeq" id="NP_455634.1">
    <property type="nucleotide sequence ID" value="NC_003198.1"/>
</dbReference>
<dbReference type="RefSeq" id="WP_001264073.1">
    <property type="nucleotide sequence ID" value="NZ_WSUR01000018.1"/>
</dbReference>
<dbReference type="SMR" id="P0A203"/>
<dbReference type="STRING" id="220341.gene:17585144"/>
<dbReference type="KEGG" id="stt:t1780"/>
<dbReference type="KEGG" id="sty:STY1177"/>
<dbReference type="PATRIC" id="fig|220341.7.peg.1177"/>
<dbReference type="eggNOG" id="ENOG5032U3R">
    <property type="taxonomic scope" value="Bacteria"/>
</dbReference>
<dbReference type="HOGENOM" id="CLU_136740_0_0_6"/>
<dbReference type="OMA" id="TFNYQWL"/>
<dbReference type="OrthoDB" id="6505101at2"/>
<dbReference type="Proteomes" id="UP000000541">
    <property type="component" value="Chromosome"/>
</dbReference>
<dbReference type="Proteomes" id="UP000002670">
    <property type="component" value="Chromosome"/>
</dbReference>
<dbReference type="InterPro" id="IPR018893">
    <property type="entry name" value="T8SS_CsgF"/>
</dbReference>
<dbReference type="NCBIfam" id="NF007469">
    <property type="entry name" value="PRK10050.1"/>
    <property type="match status" value="1"/>
</dbReference>
<dbReference type="Pfam" id="PF10614">
    <property type="entry name" value="CsgF"/>
    <property type="match status" value="1"/>
</dbReference>
<sequence length="138" mass="15159">MRVKHAVVLLMLFSPLTWAGNMTFQFRNPNFGGNPNNGSFLLNSAQAQNSYKDPAYDNDFGIETPSALDNFTQAIQSQILGGLLTNINTGKPGRMVTNDFIIDIANRDGQLQLNVTDRKTGRTSTIEVSGLQTQSTDF</sequence>
<protein>
    <recommendedName>
        <fullName>Curli production assembly/transport component CsgF</fullName>
    </recommendedName>
</protein>
<accession>P0A203</accession>
<accession>O54292</accession>
<gene>
    <name type="primary">csgF</name>
    <name type="ordered locus">STY1177</name>
    <name type="ordered locus">t1780</name>
</gene>
<comment type="function">
    <text evidence="1">May be involved in the biogenesis of curli organelles.</text>
</comment>
<feature type="signal peptide" evidence="2">
    <location>
        <begin position="1"/>
        <end position="19"/>
    </location>
</feature>
<feature type="chain" id="PRO_0000021020" description="Curli production assembly/transport component CsgF">
    <location>
        <begin position="20"/>
        <end position="138"/>
    </location>
</feature>
<organism>
    <name type="scientific">Salmonella typhi</name>
    <dbReference type="NCBI Taxonomy" id="90370"/>
    <lineage>
        <taxon>Bacteria</taxon>
        <taxon>Pseudomonadati</taxon>
        <taxon>Pseudomonadota</taxon>
        <taxon>Gammaproteobacteria</taxon>
        <taxon>Enterobacterales</taxon>
        <taxon>Enterobacteriaceae</taxon>
        <taxon>Salmonella</taxon>
    </lineage>
</organism>
<proteinExistence type="inferred from homology"/>
<keyword id="KW-0732">Signal</keyword>
<reference key="1">
    <citation type="journal article" date="2001" name="Nature">
        <title>Complete genome sequence of a multiple drug resistant Salmonella enterica serovar Typhi CT18.</title>
        <authorList>
            <person name="Parkhill J."/>
            <person name="Dougan G."/>
            <person name="James K.D."/>
            <person name="Thomson N.R."/>
            <person name="Pickard D."/>
            <person name="Wain J."/>
            <person name="Churcher C.M."/>
            <person name="Mungall K.L."/>
            <person name="Bentley S.D."/>
            <person name="Holden M.T.G."/>
            <person name="Sebaihia M."/>
            <person name="Baker S."/>
            <person name="Basham D."/>
            <person name="Brooks K."/>
            <person name="Chillingworth T."/>
            <person name="Connerton P."/>
            <person name="Cronin A."/>
            <person name="Davis P."/>
            <person name="Davies R.M."/>
            <person name="Dowd L."/>
            <person name="White N."/>
            <person name="Farrar J."/>
            <person name="Feltwell T."/>
            <person name="Hamlin N."/>
            <person name="Haque A."/>
            <person name="Hien T.T."/>
            <person name="Holroyd S."/>
            <person name="Jagels K."/>
            <person name="Krogh A."/>
            <person name="Larsen T.S."/>
            <person name="Leather S."/>
            <person name="Moule S."/>
            <person name="O'Gaora P."/>
            <person name="Parry C."/>
            <person name="Quail M.A."/>
            <person name="Rutherford K.M."/>
            <person name="Simmonds M."/>
            <person name="Skelton J."/>
            <person name="Stevens K."/>
            <person name="Whitehead S."/>
            <person name="Barrell B.G."/>
        </authorList>
    </citation>
    <scope>NUCLEOTIDE SEQUENCE [LARGE SCALE GENOMIC DNA]</scope>
    <source>
        <strain>CT18</strain>
    </source>
</reference>
<reference key="2">
    <citation type="journal article" date="2003" name="J. Bacteriol.">
        <title>Comparative genomics of Salmonella enterica serovar Typhi strains Ty2 and CT18.</title>
        <authorList>
            <person name="Deng W."/>
            <person name="Liou S.-R."/>
            <person name="Plunkett G. III"/>
            <person name="Mayhew G.F."/>
            <person name="Rose D.J."/>
            <person name="Burland V."/>
            <person name="Kodoyianni V."/>
            <person name="Schwartz D.C."/>
            <person name="Blattner F.R."/>
        </authorList>
    </citation>
    <scope>NUCLEOTIDE SEQUENCE [LARGE SCALE GENOMIC DNA]</scope>
    <source>
        <strain>ATCC 700931 / Ty2</strain>
    </source>
</reference>
<evidence type="ECO:0000250" key="1"/>
<evidence type="ECO:0000255" key="2"/>